<dbReference type="EC" id="1.1.5.4" evidence="1"/>
<dbReference type="EMBL" id="CP001628">
    <property type="protein sequence ID" value="ACS30372.1"/>
    <property type="molecule type" value="Genomic_DNA"/>
</dbReference>
<dbReference type="RefSeq" id="WP_010078988.1">
    <property type="nucleotide sequence ID" value="NC_012803.1"/>
</dbReference>
<dbReference type="SMR" id="C5CAA3"/>
<dbReference type="STRING" id="465515.Mlut_08440"/>
<dbReference type="EnsemblBacteria" id="ACS30372">
    <property type="protein sequence ID" value="ACS30372"/>
    <property type="gene ID" value="Mlut_08440"/>
</dbReference>
<dbReference type="GeneID" id="93345006"/>
<dbReference type="KEGG" id="mlu:Mlut_08440"/>
<dbReference type="PATRIC" id="fig|465515.4.peg.807"/>
<dbReference type="eggNOG" id="COG0579">
    <property type="taxonomic scope" value="Bacteria"/>
</dbReference>
<dbReference type="HOGENOM" id="CLU_028151_0_0_11"/>
<dbReference type="UniPathway" id="UPA00223">
    <property type="reaction ID" value="UER01008"/>
</dbReference>
<dbReference type="Proteomes" id="UP000000738">
    <property type="component" value="Chromosome"/>
</dbReference>
<dbReference type="GO" id="GO:0047545">
    <property type="term" value="F:2-hydroxyglutarate dehydrogenase activity"/>
    <property type="evidence" value="ECO:0007669"/>
    <property type="project" value="TreeGrafter"/>
</dbReference>
<dbReference type="GO" id="GO:0008924">
    <property type="term" value="F:L-malate dehydrogenase (quinone) activity"/>
    <property type="evidence" value="ECO:0007669"/>
    <property type="project" value="UniProtKB-UniRule"/>
</dbReference>
<dbReference type="GO" id="GO:0006099">
    <property type="term" value="P:tricarboxylic acid cycle"/>
    <property type="evidence" value="ECO:0007669"/>
    <property type="project" value="UniProtKB-UniRule"/>
</dbReference>
<dbReference type="Gene3D" id="3.30.9.10">
    <property type="entry name" value="D-Amino Acid Oxidase, subunit A, domain 2"/>
    <property type="match status" value="1"/>
</dbReference>
<dbReference type="Gene3D" id="3.50.50.60">
    <property type="entry name" value="FAD/NAD(P)-binding domain"/>
    <property type="match status" value="1"/>
</dbReference>
<dbReference type="HAMAP" id="MF_00212">
    <property type="entry name" value="MQO"/>
    <property type="match status" value="1"/>
</dbReference>
<dbReference type="InterPro" id="IPR036188">
    <property type="entry name" value="FAD/NAD-bd_sf"/>
</dbReference>
<dbReference type="InterPro" id="IPR006231">
    <property type="entry name" value="MQO"/>
</dbReference>
<dbReference type="NCBIfam" id="TIGR01320">
    <property type="entry name" value="mal_quin_oxido"/>
    <property type="match status" value="1"/>
</dbReference>
<dbReference type="NCBIfam" id="NF003603">
    <property type="entry name" value="PRK05257.1-1"/>
    <property type="match status" value="1"/>
</dbReference>
<dbReference type="NCBIfam" id="NF003605">
    <property type="entry name" value="PRK05257.1-4"/>
    <property type="match status" value="1"/>
</dbReference>
<dbReference type="NCBIfam" id="NF003606">
    <property type="entry name" value="PRK05257.2-1"/>
    <property type="match status" value="1"/>
</dbReference>
<dbReference type="NCBIfam" id="NF003609">
    <property type="entry name" value="PRK05257.2-5"/>
    <property type="match status" value="1"/>
</dbReference>
<dbReference type="NCBIfam" id="NF003610">
    <property type="entry name" value="PRK05257.3-1"/>
    <property type="match status" value="1"/>
</dbReference>
<dbReference type="NCBIfam" id="NF003611">
    <property type="entry name" value="PRK05257.3-2"/>
    <property type="match status" value="1"/>
</dbReference>
<dbReference type="NCBIfam" id="NF009875">
    <property type="entry name" value="PRK13339.1"/>
    <property type="match status" value="1"/>
</dbReference>
<dbReference type="PANTHER" id="PTHR43104">
    <property type="entry name" value="L-2-HYDROXYGLUTARATE DEHYDROGENASE, MITOCHONDRIAL"/>
    <property type="match status" value="1"/>
</dbReference>
<dbReference type="PANTHER" id="PTHR43104:SF2">
    <property type="entry name" value="L-2-HYDROXYGLUTARATE DEHYDROGENASE, MITOCHONDRIAL"/>
    <property type="match status" value="1"/>
</dbReference>
<dbReference type="Pfam" id="PF06039">
    <property type="entry name" value="Mqo"/>
    <property type="match status" value="1"/>
</dbReference>
<dbReference type="SUPFAM" id="SSF51905">
    <property type="entry name" value="FAD/NAD(P)-binding domain"/>
    <property type="match status" value="1"/>
</dbReference>
<accession>C5CAA3</accession>
<evidence type="ECO:0000255" key="1">
    <source>
        <dbReference type="HAMAP-Rule" id="MF_00212"/>
    </source>
</evidence>
<organism>
    <name type="scientific">Micrococcus luteus (strain ATCC 4698 / DSM 20030 / JCM 1464 / CCM 169 / CCUG 5858 / IAM 1056 / NBRC 3333 / NCIMB 9278 / NCTC 2665 / VKM Ac-2230)</name>
    <name type="common">Micrococcus lysodeikticus</name>
    <dbReference type="NCBI Taxonomy" id="465515"/>
    <lineage>
        <taxon>Bacteria</taxon>
        <taxon>Bacillati</taxon>
        <taxon>Actinomycetota</taxon>
        <taxon>Actinomycetes</taxon>
        <taxon>Micrococcales</taxon>
        <taxon>Micrococcaceae</taxon>
        <taxon>Micrococcus</taxon>
    </lineage>
</organism>
<gene>
    <name evidence="1" type="primary">mqo</name>
    <name type="ordered locus">Mlut_08440</name>
</gene>
<comment type="catalytic activity">
    <reaction evidence="1">
        <text>(S)-malate + a quinone = a quinol + oxaloacetate</text>
        <dbReference type="Rhea" id="RHEA:46012"/>
        <dbReference type="ChEBI" id="CHEBI:15589"/>
        <dbReference type="ChEBI" id="CHEBI:16452"/>
        <dbReference type="ChEBI" id="CHEBI:24646"/>
        <dbReference type="ChEBI" id="CHEBI:132124"/>
        <dbReference type="EC" id="1.1.5.4"/>
    </reaction>
</comment>
<comment type="cofactor">
    <cofactor evidence="1">
        <name>FAD</name>
        <dbReference type="ChEBI" id="CHEBI:57692"/>
    </cofactor>
</comment>
<comment type="pathway">
    <text evidence="1">Carbohydrate metabolism; tricarboxylic acid cycle; oxaloacetate from (S)-malate (quinone route): step 1/1.</text>
</comment>
<comment type="similarity">
    <text evidence="1">Belongs to the MQO family.</text>
</comment>
<name>MQO_MICLC</name>
<protein>
    <recommendedName>
        <fullName evidence="1">Probable malate:quinone oxidoreductase</fullName>
        <ecNumber evidence="1">1.1.5.4</ecNumber>
    </recommendedName>
    <alternativeName>
        <fullName evidence="1">MQO</fullName>
    </alternativeName>
    <alternativeName>
        <fullName evidence="1">Malate dehydrogenase [quinone]</fullName>
    </alternativeName>
</protein>
<sequence length="494" mass="53202">MPTTSSTATHDVVLIGGGIMSATLGVLLQKLEPTWSIALYENLDQAGLESSDPWNNAGTGHAALCELNYSPMDKNGRVDVTKALGINEQFWITRQFWSSLVVDGTLKDPKSFINPLPHMSFVWGDDHADYLRARYEAMSAQPVFAGMEHSEDPEQIRAWAPLLIEGRESGQRLAASRHTGGTDVDFGSLTRQLVTAMAGAGAEVRFGHKVTGLTRGTDGRWEVKVKNKAAGSEVVDRARFVFVGAGGGALPLLQKSGIPEIKGFGGFPVSGQFLRCTDESVVNQHMAKVYGQAAVGAPPMSVPHLDTRFVNGKRSLLFGPYAGFSTNFLKTGSYLDLPLSVRPHNLTTMLDVAKDNVDLTKYLVTEVLKSRDKKIDALHEFYPEADGGEWELITAGQRVQVMKRKGRFGGVLQFGTEVVTHADGSLGGLLGASPGASTAAPIMVKLLERCFPAKTAGWDGTLKELIPSLGHTLNDDPALLDEVRTVTDAALKLA</sequence>
<feature type="chain" id="PRO_1000204201" description="Probable malate:quinone oxidoreductase">
    <location>
        <begin position="1"/>
        <end position="494"/>
    </location>
</feature>
<keyword id="KW-0274">FAD</keyword>
<keyword id="KW-0285">Flavoprotein</keyword>
<keyword id="KW-0560">Oxidoreductase</keyword>
<keyword id="KW-1185">Reference proteome</keyword>
<keyword id="KW-0816">Tricarboxylic acid cycle</keyword>
<proteinExistence type="inferred from homology"/>
<reference key="1">
    <citation type="journal article" date="2010" name="J. Bacteriol.">
        <title>Genome sequence of the Fleming strain of Micrococcus luteus, a simple free-living actinobacterium.</title>
        <authorList>
            <person name="Young M."/>
            <person name="Artsatbanov V."/>
            <person name="Beller H.R."/>
            <person name="Chandra G."/>
            <person name="Chater K.F."/>
            <person name="Dover L.G."/>
            <person name="Goh E.B."/>
            <person name="Kahan T."/>
            <person name="Kaprelyants A.S."/>
            <person name="Kyrpides N."/>
            <person name="Lapidus A."/>
            <person name="Lowry S.R."/>
            <person name="Lykidis A."/>
            <person name="Mahillon J."/>
            <person name="Markowitz V."/>
            <person name="Mavromatis K."/>
            <person name="Mukamolova G.V."/>
            <person name="Oren A."/>
            <person name="Rokem J.S."/>
            <person name="Smith M.C."/>
            <person name="Young D.I."/>
            <person name="Greenblatt C.L."/>
        </authorList>
    </citation>
    <scope>NUCLEOTIDE SEQUENCE [LARGE SCALE GENOMIC DNA]</scope>
    <source>
        <strain>ATCC 4698 / DSM 20030 / JCM 1464 / CCM 169 / CCUG 5858 / IAM 1056 / NBRC 3333 / NCIMB 9278 / NCTC 2665 / VKM Ac-2230</strain>
    </source>
</reference>